<protein>
    <recommendedName>
        <fullName>Odorant-binding protein 1</fullName>
    </recommendedName>
    <alternativeName>
        <fullName>Odorant-binding protein I</fullName>
        <shortName>OBP I</shortName>
    </alternativeName>
    <alternativeName>
        <fullName>Olfactory mucosa pyrazine-binding protein I</fullName>
    </alternativeName>
</protein>
<reference evidence="1" key="1">
    <citation type="journal article" date="1997" name="Comp. Biochem. Physiol.">
        <title>Microheterogeneity of odorant-binding proteins in the porcupine revealed by N-terminal sequencing and mass spectrometry.</title>
        <authorList>
            <person name="Ganni M."/>
            <person name="Garibotti M."/>
            <person name="Scaloni A."/>
            <person name="Pucci P."/>
            <person name="Pelosi P."/>
        </authorList>
    </citation>
    <scope>PROTEIN SEQUENCE</scope>
    <source>
        <tissue>Nasal mucosa</tissue>
    </source>
</reference>
<reference evidence="1" key="2">
    <citation type="journal article" date="1993" name="Comp. Biochem. Physiol.">
        <title>Multiple types and forms of odorant-binding proteins in the Old-World porcupine Hystrix cristata.</title>
        <authorList>
            <person name="Felicioli A."/>
            <person name="Ganni M."/>
            <person name="Garibotti M."/>
            <person name="Pelosi P."/>
        </authorList>
    </citation>
    <scope>CHARACTERIZATION</scope>
    <source>
        <tissue>Nasal mucosa</tissue>
    </source>
</reference>
<comment type="function">
    <text>This soluble protein may play a specific role in odor discrimination and perception.</text>
</comment>
<comment type="subcellular location">
    <subcellularLocation>
        <location>Secreted</location>
        <location>Extracellular space</location>
    </subcellularLocation>
</comment>
<comment type="tissue specificity">
    <text>Nasal mucosa.</text>
</comment>
<comment type="similarity">
    <text evidence="1">Belongs to the calycin superfamily. Lipocalin family.</text>
</comment>
<sequence>EVVRSNNFDPSKLSGKWYSILLASDRKE</sequence>
<proteinExistence type="evidence at protein level"/>
<dbReference type="GO" id="GO:0005576">
    <property type="term" value="C:extracellular region"/>
    <property type="evidence" value="ECO:0007669"/>
    <property type="project" value="UniProtKB-SubCell"/>
</dbReference>
<dbReference type="GO" id="GO:0007608">
    <property type="term" value="P:sensory perception of smell"/>
    <property type="evidence" value="ECO:0007669"/>
    <property type="project" value="UniProtKB-KW"/>
</dbReference>
<dbReference type="Gene3D" id="2.40.128.20">
    <property type="match status" value="1"/>
</dbReference>
<dbReference type="InterPro" id="IPR012674">
    <property type="entry name" value="Calycin"/>
</dbReference>
<dbReference type="InterPro" id="IPR022272">
    <property type="entry name" value="Lipocalin_CS"/>
</dbReference>
<dbReference type="SUPFAM" id="SSF50814">
    <property type="entry name" value="Lipocalins"/>
    <property type="match status" value="1"/>
</dbReference>
<dbReference type="PROSITE" id="PS00213">
    <property type="entry name" value="LIPOCALIN"/>
    <property type="match status" value="1"/>
</dbReference>
<feature type="chain" id="PRO_0000201026" description="Odorant-binding protein 1">
    <location>
        <begin position="1"/>
        <end position="28" status="greater than"/>
    </location>
</feature>
<feature type="non-terminal residue" evidence="1">
    <location>
        <position position="28"/>
    </location>
</feature>
<keyword id="KW-0903">Direct protein sequencing</keyword>
<keyword id="KW-0552">Olfaction</keyword>
<keyword id="KW-0964">Secreted</keyword>
<keyword id="KW-0716">Sensory transduction</keyword>
<keyword id="KW-0813">Transport</keyword>
<evidence type="ECO:0000305" key="1"/>
<name>OBP1_HYSCR</name>
<organism evidence="1">
    <name type="scientific">Hystrix cristata</name>
    <name type="common">North African crested porcupine</name>
    <dbReference type="NCBI Taxonomy" id="10137"/>
    <lineage>
        <taxon>Eukaryota</taxon>
        <taxon>Metazoa</taxon>
        <taxon>Chordata</taxon>
        <taxon>Craniata</taxon>
        <taxon>Vertebrata</taxon>
        <taxon>Euteleostomi</taxon>
        <taxon>Mammalia</taxon>
        <taxon>Eutheria</taxon>
        <taxon>Euarchontoglires</taxon>
        <taxon>Glires</taxon>
        <taxon>Rodentia</taxon>
        <taxon>Hystricomorpha</taxon>
        <taxon>Hystricidae</taxon>
        <taxon>Hystrix</taxon>
    </lineage>
</organism>
<accession>P81647</accession>